<comment type="similarity">
    <text evidence="1">Belongs to the universal ribosomal protein uS9 family.</text>
</comment>
<proteinExistence type="inferred from homology"/>
<reference key="1">
    <citation type="journal article" date="2005" name="Nat. Biotechnol.">
        <title>The complete genome sequence of the meat-borne lactic acid bacterium Lactobacillus sakei 23K.</title>
        <authorList>
            <person name="Chaillou S."/>
            <person name="Champomier-Verges M.-C."/>
            <person name="Cornet M."/>
            <person name="Crutz-Le Coq A.-M."/>
            <person name="Dudez A.-M."/>
            <person name="Martin V."/>
            <person name="Beaufils S."/>
            <person name="Darbon-Rongere E."/>
            <person name="Bossy R."/>
            <person name="Loux V."/>
            <person name="Zagorec M."/>
        </authorList>
    </citation>
    <scope>NUCLEOTIDE SEQUENCE [LARGE SCALE GENOMIC DNA]</scope>
    <source>
        <strain>23K</strain>
    </source>
</reference>
<name>RS9_LATSS</name>
<dbReference type="EMBL" id="CR936503">
    <property type="protein sequence ID" value="CAI56029.1"/>
    <property type="molecule type" value="Genomic_DNA"/>
</dbReference>
<dbReference type="RefSeq" id="WP_011375412.1">
    <property type="nucleotide sequence ID" value="NC_007576.1"/>
</dbReference>
<dbReference type="SMR" id="Q38UV5"/>
<dbReference type="STRING" id="314315.LCA_1721"/>
<dbReference type="KEGG" id="lsa:LCA_1721"/>
<dbReference type="eggNOG" id="COG0103">
    <property type="taxonomic scope" value="Bacteria"/>
</dbReference>
<dbReference type="HOGENOM" id="CLU_046483_2_1_9"/>
<dbReference type="OrthoDB" id="9803965at2"/>
<dbReference type="Proteomes" id="UP000002707">
    <property type="component" value="Chromosome"/>
</dbReference>
<dbReference type="GO" id="GO:0022627">
    <property type="term" value="C:cytosolic small ribosomal subunit"/>
    <property type="evidence" value="ECO:0007669"/>
    <property type="project" value="TreeGrafter"/>
</dbReference>
<dbReference type="GO" id="GO:0003723">
    <property type="term" value="F:RNA binding"/>
    <property type="evidence" value="ECO:0007669"/>
    <property type="project" value="TreeGrafter"/>
</dbReference>
<dbReference type="GO" id="GO:0003735">
    <property type="term" value="F:structural constituent of ribosome"/>
    <property type="evidence" value="ECO:0007669"/>
    <property type="project" value="InterPro"/>
</dbReference>
<dbReference type="GO" id="GO:0006412">
    <property type="term" value="P:translation"/>
    <property type="evidence" value="ECO:0007669"/>
    <property type="project" value="UniProtKB-UniRule"/>
</dbReference>
<dbReference type="FunFam" id="3.30.230.10:FF:000001">
    <property type="entry name" value="30S ribosomal protein S9"/>
    <property type="match status" value="1"/>
</dbReference>
<dbReference type="Gene3D" id="3.30.230.10">
    <property type="match status" value="1"/>
</dbReference>
<dbReference type="HAMAP" id="MF_00532_B">
    <property type="entry name" value="Ribosomal_uS9_B"/>
    <property type="match status" value="1"/>
</dbReference>
<dbReference type="InterPro" id="IPR020568">
    <property type="entry name" value="Ribosomal_Su5_D2-typ_SF"/>
</dbReference>
<dbReference type="InterPro" id="IPR000754">
    <property type="entry name" value="Ribosomal_uS9"/>
</dbReference>
<dbReference type="InterPro" id="IPR023035">
    <property type="entry name" value="Ribosomal_uS9_bac/plastid"/>
</dbReference>
<dbReference type="InterPro" id="IPR020574">
    <property type="entry name" value="Ribosomal_uS9_CS"/>
</dbReference>
<dbReference type="InterPro" id="IPR014721">
    <property type="entry name" value="Ribsml_uS5_D2-typ_fold_subgr"/>
</dbReference>
<dbReference type="NCBIfam" id="NF001099">
    <property type="entry name" value="PRK00132.1"/>
    <property type="match status" value="1"/>
</dbReference>
<dbReference type="PANTHER" id="PTHR21569">
    <property type="entry name" value="RIBOSOMAL PROTEIN S9"/>
    <property type="match status" value="1"/>
</dbReference>
<dbReference type="PANTHER" id="PTHR21569:SF1">
    <property type="entry name" value="SMALL RIBOSOMAL SUBUNIT PROTEIN US9M"/>
    <property type="match status" value="1"/>
</dbReference>
<dbReference type="Pfam" id="PF00380">
    <property type="entry name" value="Ribosomal_S9"/>
    <property type="match status" value="1"/>
</dbReference>
<dbReference type="SUPFAM" id="SSF54211">
    <property type="entry name" value="Ribosomal protein S5 domain 2-like"/>
    <property type="match status" value="1"/>
</dbReference>
<dbReference type="PROSITE" id="PS00360">
    <property type="entry name" value="RIBOSOMAL_S9"/>
    <property type="match status" value="1"/>
</dbReference>
<keyword id="KW-1185">Reference proteome</keyword>
<keyword id="KW-0687">Ribonucleoprotein</keyword>
<keyword id="KW-0689">Ribosomal protein</keyword>
<protein>
    <recommendedName>
        <fullName evidence="1">Small ribosomal subunit protein uS9</fullName>
    </recommendedName>
    <alternativeName>
        <fullName evidence="3">30S ribosomal protein S9</fullName>
    </alternativeName>
</protein>
<feature type="chain" id="PRO_1000051244" description="Small ribosomal subunit protein uS9">
    <location>
        <begin position="1"/>
        <end position="130"/>
    </location>
</feature>
<feature type="region of interest" description="Disordered" evidence="2">
    <location>
        <begin position="99"/>
        <end position="130"/>
    </location>
</feature>
<feature type="compositionally biased region" description="Basic residues" evidence="2">
    <location>
        <begin position="111"/>
        <end position="130"/>
    </location>
</feature>
<organism>
    <name type="scientific">Latilactobacillus sakei subsp. sakei (strain 23K)</name>
    <name type="common">Lactobacillus sakei subsp. sakei</name>
    <dbReference type="NCBI Taxonomy" id="314315"/>
    <lineage>
        <taxon>Bacteria</taxon>
        <taxon>Bacillati</taxon>
        <taxon>Bacillota</taxon>
        <taxon>Bacilli</taxon>
        <taxon>Lactobacillales</taxon>
        <taxon>Lactobacillaceae</taxon>
        <taxon>Latilactobacillus</taxon>
    </lineage>
</organism>
<gene>
    <name evidence="1" type="primary">rpsI</name>
    <name type="ordered locus">LCA_1721</name>
</gene>
<accession>Q38UV5</accession>
<evidence type="ECO:0000255" key="1">
    <source>
        <dbReference type="HAMAP-Rule" id="MF_00532"/>
    </source>
</evidence>
<evidence type="ECO:0000256" key="2">
    <source>
        <dbReference type="SAM" id="MobiDB-lite"/>
    </source>
</evidence>
<evidence type="ECO:0000305" key="3"/>
<sequence length="130" mass="14272">MAQVTYNGTGRRKNSVARVRLVPGTGKITINNKDVVDYVPFANLILDMKQPLTITETTDSYDILVNVNGGGFSGQAGAIRHGISRALLTVDPDFRPALKSAGMLTRDPRMKERKKPGLKKARKASQFSKR</sequence>